<sequence>MGNEFRMCDDCQATNVKTLIPKLKKVDSCATIEVGCQSYCGPGRKKSFAFVNNRPVAAPTEDELIVKIEAKLNK</sequence>
<evidence type="ECO:0000255" key="1">
    <source>
        <dbReference type="HAMAP-Rule" id="MF_01863"/>
    </source>
</evidence>
<name>Y5562_BACC7</name>
<organism>
    <name type="scientific">Bacillus cereus (strain AH187)</name>
    <dbReference type="NCBI Taxonomy" id="405534"/>
    <lineage>
        <taxon>Bacteria</taxon>
        <taxon>Bacillati</taxon>
        <taxon>Bacillota</taxon>
        <taxon>Bacilli</taxon>
        <taxon>Bacillales</taxon>
        <taxon>Bacillaceae</taxon>
        <taxon>Bacillus</taxon>
        <taxon>Bacillus cereus group</taxon>
    </lineage>
</organism>
<reference key="1">
    <citation type="submission" date="2008-10" db="EMBL/GenBank/DDBJ databases">
        <title>Genome sequence of Bacillus cereus AH187.</title>
        <authorList>
            <person name="Dodson R.J."/>
            <person name="Durkin A.S."/>
            <person name="Rosovitz M.J."/>
            <person name="Rasko D.A."/>
            <person name="Kolsto A.B."/>
            <person name="Okstad O.A."/>
            <person name="Ravel J."/>
            <person name="Sutton G."/>
        </authorList>
    </citation>
    <scope>NUCLEOTIDE SEQUENCE [LARGE SCALE GENOMIC DNA]</scope>
    <source>
        <strain>AH187</strain>
    </source>
</reference>
<dbReference type="EMBL" id="CP001177">
    <property type="protein sequence ID" value="ACJ78171.1"/>
    <property type="molecule type" value="Genomic_DNA"/>
</dbReference>
<dbReference type="SMR" id="B7HYE4"/>
<dbReference type="KEGG" id="bcr:BCAH187_A5562"/>
<dbReference type="HOGENOM" id="CLU_163820_1_0_9"/>
<dbReference type="Proteomes" id="UP000002214">
    <property type="component" value="Chromosome"/>
</dbReference>
<dbReference type="HAMAP" id="MF_01863">
    <property type="entry name" value="UPF0741"/>
    <property type="match status" value="1"/>
</dbReference>
<dbReference type="InterPro" id="IPR009910">
    <property type="entry name" value="DUF1450"/>
</dbReference>
<dbReference type="InterPro" id="IPR020880">
    <property type="entry name" value="UPF0741"/>
</dbReference>
<dbReference type="Pfam" id="PF07293">
    <property type="entry name" value="DUF1450"/>
    <property type="match status" value="1"/>
</dbReference>
<comment type="similarity">
    <text evidence="1">Belongs to the UPF0741 family.</text>
</comment>
<proteinExistence type="inferred from homology"/>
<protein>
    <recommendedName>
        <fullName evidence="1">UPF0741 protein BCAH187_A5562</fullName>
    </recommendedName>
</protein>
<feature type="chain" id="PRO_0000372726" description="UPF0741 protein BCAH187_A5562">
    <location>
        <begin position="1"/>
        <end position="74"/>
    </location>
</feature>
<accession>B7HYE4</accession>
<gene>
    <name type="ordered locus">BCAH187_A5562</name>
</gene>